<gene>
    <name evidence="1" type="primary">dapE</name>
    <name type="ordered locus">PSPTO_1523</name>
    <name type="ORF">PSPTO1523</name>
</gene>
<feature type="chain" id="PRO_0000375669" description="Succinyl-diaminopimelate desuccinylase">
    <location>
        <begin position="1"/>
        <end position="383"/>
    </location>
</feature>
<feature type="active site" evidence="1">
    <location>
        <position position="75"/>
    </location>
</feature>
<feature type="active site" description="Proton acceptor" evidence="1">
    <location>
        <position position="141"/>
    </location>
</feature>
<feature type="binding site" evidence="1">
    <location>
        <position position="73"/>
    </location>
    <ligand>
        <name>Zn(2+)</name>
        <dbReference type="ChEBI" id="CHEBI:29105"/>
        <label>1</label>
    </ligand>
</feature>
<feature type="binding site" evidence="1">
    <location>
        <position position="107"/>
    </location>
    <ligand>
        <name>Zn(2+)</name>
        <dbReference type="ChEBI" id="CHEBI:29105"/>
        <label>1</label>
    </ligand>
</feature>
<feature type="binding site" evidence="1">
    <location>
        <position position="107"/>
    </location>
    <ligand>
        <name>Zn(2+)</name>
        <dbReference type="ChEBI" id="CHEBI:29105"/>
        <label>2</label>
    </ligand>
</feature>
<feature type="binding site" evidence="1">
    <location>
        <position position="142"/>
    </location>
    <ligand>
        <name>Zn(2+)</name>
        <dbReference type="ChEBI" id="CHEBI:29105"/>
        <label>2</label>
    </ligand>
</feature>
<feature type="binding site" evidence="1">
    <location>
        <position position="170"/>
    </location>
    <ligand>
        <name>Zn(2+)</name>
        <dbReference type="ChEBI" id="CHEBI:29105"/>
        <label>1</label>
    </ligand>
</feature>
<feature type="binding site" evidence="1">
    <location>
        <position position="356"/>
    </location>
    <ligand>
        <name>Zn(2+)</name>
        <dbReference type="ChEBI" id="CHEBI:29105"/>
        <label>2</label>
    </ligand>
</feature>
<name>DAPE_PSESM</name>
<accession>Q886Q4</accession>
<keyword id="KW-0028">Amino-acid biosynthesis</keyword>
<keyword id="KW-0170">Cobalt</keyword>
<keyword id="KW-0220">Diaminopimelate biosynthesis</keyword>
<keyword id="KW-0378">Hydrolase</keyword>
<keyword id="KW-0457">Lysine biosynthesis</keyword>
<keyword id="KW-0479">Metal-binding</keyword>
<keyword id="KW-1185">Reference proteome</keyword>
<keyword id="KW-0862">Zinc</keyword>
<organism>
    <name type="scientific">Pseudomonas syringae pv. tomato (strain ATCC BAA-871 / DC3000)</name>
    <dbReference type="NCBI Taxonomy" id="223283"/>
    <lineage>
        <taxon>Bacteria</taxon>
        <taxon>Pseudomonadati</taxon>
        <taxon>Pseudomonadota</taxon>
        <taxon>Gammaproteobacteria</taxon>
        <taxon>Pseudomonadales</taxon>
        <taxon>Pseudomonadaceae</taxon>
        <taxon>Pseudomonas</taxon>
    </lineage>
</organism>
<comment type="function">
    <text evidence="1">Catalyzes the hydrolysis of N-succinyl-L,L-diaminopimelic acid (SDAP), forming succinate and LL-2,6-diaminopimelate (DAP), an intermediate involved in the bacterial biosynthesis of lysine and meso-diaminopimelic acid, an essential component of bacterial cell walls.</text>
</comment>
<comment type="catalytic activity">
    <reaction evidence="1">
        <text>N-succinyl-(2S,6S)-2,6-diaminopimelate + H2O = (2S,6S)-2,6-diaminopimelate + succinate</text>
        <dbReference type="Rhea" id="RHEA:22608"/>
        <dbReference type="ChEBI" id="CHEBI:15377"/>
        <dbReference type="ChEBI" id="CHEBI:30031"/>
        <dbReference type="ChEBI" id="CHEBI:57609"/>
        <dbReference type="ChEBI" id="CHEBI:58087"/>
        <dbReference type="EC" id="3.5.1.18"/>
    </reaction>
</comment>
<comment type="cofactor">
    <cofactor evidence="1">
        <name>Zn(2+)</name>
        <dbReference type="ChEBI" id="CHEBI:29105"/>
    </cofactor>
    <cofactor evidence="1">
        <name>Co(2+)</name>
        <dbReference type="ChEBI" id="CHEBI:48828"/>
    </cofactor>
    <text evidence="1">Binds 2 Zn(2+) or Co(2+) ions per subunit.</text>
</comment>
<comment type="pathway">
    <text evidence="1">Amino-acid biosynthesis; L-lysine biosynthesis via DAP pathway; LL-2,6-diaminopimelate from (S)-tetrahydrodipicolinate (succinylase route): step 3/3.</text>
</comment>
<comment type="subunit">
    <text evidence="1">Homodimer.</text>
</comment>
<comment type="similarity">
    <text evidence="1">Belongs to the peptidase M20A family. DapE subfamily.</text>
</comment>
<dbReference type="EC" id="3.5.1.18" evidence="1"/>
<dbReference type="EMBL" id="AE016853">
    <property type="protein sequence ID" value="AAO55043.1"/>
    <property type="molecule type" value="Genomic_DNA"/>
</dbReference>
<dbReference type="RefSeq" id="NP_791348.1">
    <property type="nucleotide sequence ID" value="NC_004578.1"/>
</dbReference>
<dbReference type="RefSeq" id="WP_005765961.1">
    <property type="nucleotide sequence ID" value="NC_004578.1"/>
</dbReference>
<dbReference type="SMR" id="Q886Q4"/>
<dbReference type="STRING" id="223283.PSPTO_1523"/>
<dbReference type="GeneID" id="1183160"/>
<dbReference type="KEGG" id="pst:PSPTO_1523"/>
<dbReference type="PATRIC" id="fig|223283.9.peg.1546"/>
<dbReference type="eggNOG" id="COG0624">
    <property type="taxonomic scope" value="Bacteria"/>
</dbReference>
<dbReference type="HOGENOM" id="CLU_021802_4_0_6"/>
<dbReference type="OrthoDB" id="9809784at2"/>
<dbReference type="PhylomeDB" id="Q886Q4"/>
<dbReference type="UniPathway" id="UPA00034">
    <property type="reaction ID" value="UER00021"/>
</dbReference>
<dbReference type="Proteomes" id="UP000002515">
    <property type="component" value="Chromosome"/>
</dbReference>
<dbReference type="GO" id="GO:0008777">
    <property type="term" value="F:acetylornithine deacetylase activity"/>
    <property type="evidence" value="ECO:0007669"/>
    <property type="project" value="TreeGrafter"/>
</dbReference>
<dbReference type="GO" id="GO:0050897">
    <property type="term" value="F:cobalt ion binding"/>
    <property type="evidence" value="ECO:0007669"/>
    <property type="project" value="UniProtKB-UniRule"/>
</dbReference>
<dbReference type="GO" id="GO:0009014">
    <property type="term" value="F:succinyl-diaminopimelate desuccinylase activity"/>
    <property type="evidence" value="ECO:0007669"/>
    <property type="project" value="UniProtKB-UniRule"/>
</dbReference>
<dbReference type="GO" id="GO:0008270">
    <property type="term" value="F:zinc ion binding"/>
    <property type="evidence" value="ECO:0007669"/>
    <property type="project" value="UniProtKB-UniRule"/>
</dbReference>
<dbReference type="GO" id="GO:0019877">
    <property type="term" value="P:diaminopimelate biosynthetic process"/>
    <property type="evidence" value="ECO:0007669"/>
    <property type="project" value="UniProtKB-UniRule"/>
</dbReference>
<dbReference type="GO" id="GO:0006526">
    <property type="term" value="P:L-arginine biosynthetic process"/>
    <property type="evidence" value="ECO:0007669"/>
    <property type="project" value="TreeGrafter"/>
</dbReference>
<dbReference type="GO" id="GO:0009089">
    <property type="term" value="P:lysine biosynthetic process via diaminopimelate"/>
    <property type="evidence" value="ECO:0007669"/>
    <property type="project" value="UniProtKB-UniRule"/>
</dbReference>
<dbReference type="CDD" id="cd03891">
    <property type="entry name" value="M20_DapE_proteobac"/>
    <property type="match status" value="1"/>
</dbReference>
<dbReference type="FunFam" id="3.30.70.360:FF:000011">
    <property type="entry name" value="Succinyl-diaminopimelate desuccinylase"/>
    <property type="match status" value="1"/>
</dbReference>
<dbReference type="FunFam" id="3.40.630.10:FF:000005">
    <property type="entry name" value="Succinyl-diaminopimelate desuccinylase"/>
    <property type="match status" value="1"/>
</dbReference>
<dbReference type="Gene3D" id="3.40.630.10">
    <property type="entry name" value="Zn peptidases"/>
    <property type="match status" value="2"/>
</dbReference>
<dbReference type="HAMAP" id="MF_01690">
    <property type="entry name" value="DapE"/>
    <property type="match status" value="1"/>
</dbReference>
<dbReference type="InterPro" id="IPR001261">
    <property type="entry name" value="ArgE/DapE_CS"/>
</dbReference>
<dbReference type="InterPro" id="IPR036264">
    <property type="entry name" value="Bact_exopeptidase_dim_dom"/>
</dbReference>
<dbReference type="InterPro" id="IPR005941">
    <property type="entry name" value="DapE_proteobac"/>
</dbReference>
<dbReference type="InterPro" id="IPR002933">
    <property type="entry name" value="Peptidase_M20"/>
</dbReference>
<dbReference type="InterPro" id="IPR011650">
    <property type="entry name" value="Peptidase_M20_dimer"/>
</dbReference>
<dbReference type="InterPro" id="IPR050072">
    <property type="entry name" value="Peptidase_M20A"/>
</dbReference>
<dbReference type="NCBIfam" id="TIGR01246">
    <property type="entry name" value="dapE_proteo"/>
    <property type="match status" value="1"/>
</dbReference>
<dbReference type="NCBIfam" id="NF009557">
    <property type="entry name" value="PRK13009.1"/>
    <property type="match status" value="1"/>
</dbReference>
<dbReference type="PANTHER" id="PTHR43808">
    <property type="entry name" value="ACETYLORNITHINE DEACETYLASE"/>
    <property type="match status" value="1"/>
</dbReference>
<dbReference type="PANTHER" id="PTHR43808:SF31">
    <property type="entry name" value="N-ACETYL-L-CITRULLINE DEACETYLASE"/>
    <property type="match status" value="1"/>
</dbReference>
<dbReference type="Pfam" id="PF07687">
    <property type="entry name" value="M20_dimer"/>
    <property type="match status" value="1"/>
</dbReference>
<dbReference type="Pfam" id="PF01546">
    <property type="entry name" value="Peptidase_M20"/>
    <property type="match status" value="1"/>
</dbReference>
<dbReference type="SUPFAM" id="SSF55031">
    <property type="entry name" value="Bacterial exopeptidase dimerisation domain"/>
    <property type="match status" value="1"/>
</dbReference>
<dbReference type="SUPFAM" id="SSF53187">
    <property type="entry name" value="Zn-dependent exopeptidases"/>
    <property type="match status" value="1"/>
</dbReference>
<dbReference type="PROSITE" id="PS00759">
    <property type="entry name" value="ARGE_DAPE_CPG2_2"/>
    <property type="match status" value="1"/>
</dbReference>
<proteinExistence type="inferred from homology"/>
<evidence type="ECO:0000255" key="1">
    <source>
        <dbReference type="HAMAP-Rule" id="MF_01690"/>
    </source>
</evidence>
<protein>
    <recommendedName>
        <fullName evidence="1">Succinyl-diaminopimelate desuccinylase</fullName>
        <shortName evidence="1">SDAP desuccinylase</shortName>
        <ecNumber evidence="1">3.5.1.18</ecNumber>
    </recommendedName>
    <alternativeName>
        <fullName evidence="1">N-succinyl-LL-2,6-diaminoheptanedioate amidohydrolase</fullName>
    </alternativeName>
</protein>
<reference key="1">
    <citation type="journal article" date="2003" name="Proc. Natl. Acad. Sci. U.S.A.">
        <title>The complete genome sequence of the Arabidopsis and tomato pathogen Pseudomonas syringae pv. tomato DC3000.</title>
        <authorList>
            <person name="Buell C.R."/>
            <person name="Joardar V."/>
            <person name="Lindeberg M."/>
            <person name="Selengut J."/>
            <person name="Paulsen I.T."/>
            <person name="Gwinn M.L."/>
            <person name="Dodson R.J."/>
            <person name="DeBoy R.T."/>
            <person name="Durkin A.S."/>
            <person name="Kolonay J.F."/>
            <person name="Madupu R."/>
            <person name="Daugherty S.C."/>
            <person name="Brinkac L.M."/>
            <person name="Beanan M.J."/>
            <person name="Haft D.H."/>
            <person name="Nelson W.C."/>
            <person name="Davidsen T.M."/>
            <person name="Zafar N."/>
            <person name="Zhou L."/>
            <person name="Liu J."/>
            <person name="Yuan Q."/>
            <person name="Khouri H.M."/>
            <person name="Fedorova N.B."/>
            <person name="Tran B."/>
            <person name="Russell D."/>
            <person name="Berry K.J."/>
            <person name="Utterback T.R."/>
            <person name="Van Aken S.E."/>
            <person name="Feldblyum T.V."/>
            <person name="D'Ascenzo M."/>
            <person name="Deng W.-L."/>
            <person name="Ramos A.R."/>
            <person name="Alfano J.R."/>
            <person name="Cartinhour S."/>
            <person name="Chatterjee A.K."/>
            <person name="Delaney T.P."/>
            <person name="Lazarowitz S.G."/>
            <person name="Martin G.B."/>
            <person name="Schneider D.J."/>
            <person name="Tang X."/>
            <person name="Bender C.L."/>
            <person name="White O."/>
            <person name="Fraser C.M."/>
            <person name="Collmer A."/>
        </authorList>
    </citation>
    <scope>NUCLEOTIDE SEQUENCE [LARGE SCALE GENOMIC DNA]</scope>
    <source>
        <strain>ATCC BAA-871 / DC3000</strain>
    </source>
</reference>
<sequence length="383" mass="41082">MTAPADLSPTLQLACDLIRRPSVTPVDADCQTVMMQRLGDAGFKLEPMRIEDVDNFWATHGTREGPVLCFAGHTDVVPTGPVQDWQNDPFDALIDEHGMLCGRGAADMKGSLAAMLVAAERFVADHPDHKGSVAFLITSDEEGPAHHGTKAVVERLAARNERLDWCIVGEPSSTTLVGDVVKNGRRGSLGAKLTVRGKQGHVAYPHLAKNPIHLATPALAELAAEHWDNGNDFFPPTSFQISNLNSGTGATNVIPGDLVAVFNFRFSTESTVEGLQQRVAAILDKHELDWHVDWALSGLPFLTEPGALLDAVSSSIKSVTGRDTKASTSGGTSDGRFIATLGTQVVELGPVNATIHQVNERILASDLDVLTEIYYQTLVKLLA</sequence>